<dbReference type="EMBL" id="AF033609">
    <property type="protein sequence ID" value="AAB92541.1"/>
    <property type="molecule type" value="Genomic_DNA"/>
</dbReference>
<dbReference type="GO" id="GO:0009507">
    <property type="term" value="C:chloroplast"/>
    <property type="evidence" value="ECO:0007669"/>
    <property type="project" value="UniProtKB-SubCell"/>
</dbReference>
<dbReference type="GO" id="GO:0003723">
    <property type="term" value="F:RNA binding"/>
    <property type="evidence" value="ECO:0007669"/>
    <property type="project" value="UniProtKB-KW"/>
</dbReference>
<dbReference type="GO" id="GO:0006397">
    <property type="term" value="P:mRNA processing"/>
    <property type="evidence" value="ECO:0007669"/>
    <property type="project" value="UniProtKB-KW"/>
</dbReference>
<dbReference type="GO" id="GO:0008380">
    <property type="term" value="P:RNA splicing"/>
    <property type="evidence" value="ECO:0007669"/>
    <property type="project" value="UniProtKB-UniRule"/>
</dbReference>
<dbReference type="GO" id="GO:0008033">
    <property type="term" value="P:tRNA processing"/>
    <property type="evidence" value="ECO:0007669"/>
    <property type="project" value="UniProtKB-KW"/>
</dbReference>
<dbReference type="HAMAP" id="MF_01390">
    <property type="entry name" value="MatK"/>
    <property type="match status" value="1"/>
</dbReference>
<dbReference type="InterPro" id="IPR024937">
    <property type="entry name" value="Domain_X"/>
</dbReference>
<dbReference type="InterPro" id="IPR002866">
    <property type="entry name" value="Maturase_MatK"/>
</dbReference>
<dbReference type="InterPro" id="IPR024942">
    <property type="entry name" value="Maturase_MatK_N"/>
</dbReference>
<dbReference type="PANTHER" id="PTHR34811">
    <property type="entry name" value="MATURASE K"/>
    <property type="match status" value="1"/>
</dbReference>
<dbReference type="PANTHER" id="PTHR34811:SF1">
    <property type="entry name" value="MATURASE K"/>
    <property type="match status" value="1"/>
</dbReference>
<dbReference type="Pfam" id="PF01348">
    <property type="entry name" value="Intron_maturas2"/>
    <property type="match status" value="1"/>
</dbReference>
<dbReference type="Pfam" id="PF01824">
    <property type="entry name" value="MatK_N"/>
    <property type="match status" value="1"/>
</dbReference>
<name>MATK_PAETE</name>
<geneLocation type="chloroplast"/>
<keyword id="KW-0150">Chloroplast</keyword>
<keyword id="KW-0507">mRNA processing</keyword>
<keyword id="KW-0934">Plastid</keyword>
<keyword id="KW-0694">RNA-binding</keyword>
<keyword id="KW-0819">tRNA processing</keyword>
<gene>
    <name evidence="1" type="primary">matK</name>
</gene>
<reference key="1">
    <citation type="journal article" date="1997" name="Am. J. Bot.">
        <title>Chloroplast DNA phylogeny, reticulate evolution, and biogeography of Paeonia (Paeoniaceae).</title>
        <authorList>
            <person name="Sang T."/>
            <person name="Crawford D.J."/>
            <person name="Stuessy T.F."/>
        </authorList>
    </citation>
    <scope>NUCLEOTIDE SEQUENCE [GENOMIC DNA]</scope>
</reference>
<organism>
    <name type="scientific">Paeonia tenuifolia</name>
    <name type="common">Fernleaf peony</name>
    <dbReference type="NCBI Taxonomy" id="13626"/>
    <lineage>
        <taxon>Eukaryota</taxon>
        <taxon>Viridiplantae</taxon>
        <taxon>Streptophyta</taxon>
        <taxon>Embryophyta</taxon>
        <taxon>Tracheophyta</taxon>
        <taxon>Spermatophyta</taxon>
        <taxon>Magnoliopsida</taxon>
        <taxon>eudicotyledons</taxon>
        <taxon>Gunneridae</taxon>
        <taxon>Pentapetalae</taxon>
        <taxon>Saxifragales</taxon>
        <taxon>Paeoniaceae</taxon>
        <taxon>Paeonia</taxon>
    </lineage>
</organism>
<proteinExistence type="inferred from homology"/>
<sequence>MEKSQGYLELDKSWRHDFLYPLIFQEYIYALAHEQGLNRSILLENTDHDNKYSSLIVKRLITLIHQQNHFLIFDNDSNQNPFWKHNNNLYSQTISEGFVIIVEIPFSPRFVDSLEEKKKILKSNNLRSIHSIFPFLEDQILHLNFVANILIPYPIHLEIVVQSLRYRVKDASSLHLLRFFLFTLNKSISSFSKRNQRFFLFLYNSHVYEYESTFLFLRNKTSHLRSTSSGAFLERIFFYGKIKHLIEVFANDFQAILWLFKDPFMHYVRYQGKSILASKRTSLRMNKWKYYLVNFWQCQFYVWSQPGRVSINQLSNHSLDFLGYLSSVRRNPLAVRSQMLENSFLTDNAIKKFDIIVLLISLIGSLAKAKFCNVLGHPLSKPARADSSDSDIIERFVRICRNLSHYHSGSSKKKSLYRIKYILRLSCARTLARKHKTTVRSFLKRLGSELLEEFLTEDGQVISLIFPRTSSTSWRLYRGGIWYLDITCINDLANHE</sequence>
<feature type="chain" id="PRO_0000143572" description="Maturase K">
    <location>
        <begin position="1"/>
        <end position="496"/>
    </location>
</feature>
<accession>Q7J602</accession>
<evidence type="ECO:0000255" key="1">
    <source>
        <dbReference type="HAMAP-Rule" id="MF_01390"/>
    </source>
</evidence>
<protein>
    <recommendedName>
        <fullName evidence="1">Maturase K</fullName>
    </recommendedName>
    <alternativeName>
        <fullName evidence="1">Intron maturase</fullName>
    </alternativeName>
</protein>
<comment type="function">
    <text evidence="1">Usually encoded in the trnK tRNA gene intron. Probably assists in splicing its own and other chloroplast group II introns.</text>
</comment>
<comment type="subcellular location">
    <subcellularLocation>
        <location>Plastid</location>
        <location>Chloroplast</location>
    </subcellularLocation>
</comment>
<comment type="similarity">
    <text evidence="1">Belongs to the intron maturase 2 family. MatK subfamily.</text>
</comment>